<protein>
    <recommendedName>
        <fullName evidence="1">N-acetyl-gamma-glutamyl-phosphate reductase</fullName>
        <shortName evidence="1">AGPR</shortName>
        <ecNumber evidence="1">1.2.1.38</ecNumber>
    </recommendedName>
    <alternativeName>
        <fullName evidence="1">N-acetyl-glutamate semialdehyde dehydrogenase</fullName>
        <shortName evidence="1">NAGSA dehydrogenase</shortName>
    </alternativeName>
</protein>
<feature type="chain" id="PRO_1000010981" description="N-acetyl-gamma-glutamyl-phosphate reductase">
    <location>
        <begin position="1"/>
        <end position="324"/>
    </location>
</feature>
<feature type="active site" evidence="1">
    <location>
        <position position="131"/>
    </location>
</feature>
<dbReference type="EC" id="1.2.1.38" evidence="1"/>
<dbReference type="EMBL" id="CP000494">
    <property type="protein sequence ID" value="ABQ33400.1"/>
    <property type="molecule type" value="Genomic_DNA"/>
</dbReference>
<dbReference type="RefSeq" id="WP_012041446.1">
    <property type="nucleotide sequence ID" value="NC_009485.1"/>
</dbReference>
<dbReference type="SMR" id="A5EB56"/>
<dbReference type="STRING" id="288000.BBta_1151"/>
<dbReference type="KEGG" id="bbt:BBta_1151"/>
<dbReference type="eggNOG" id="COG0002">
    <property type="taxonomic scope" value="Bacteria"/>
</dbReference>
<dbReference type="HOGENOM" id="CLU_006384_0_1_5"/>
<dbReference type="OrthoDB" id="9801289at2"/>
<dbReference type="UniPathway" id="UPA00068">
    <property type="reaction ID" value="UER00108"/>
</dbReference>
<dbReference type="Proteomes" id="UP000000246">
    <property type="component" value="Chromosome"/>
</dbReference>
<dbReference type="GO" id="GO:0005737">
    <property type="term" value="C:cytoplasm"/>
    <property type="evidence" value="ECO:0007669"/>
    <property type="project" value="UniProtKB-SubCell"/>
</dbReference>
<dbReference type="GO" id="GO:0003942">
    <property type="term" value="F:N-acetyl-gamma-glutamyl-phosphate reductase activity"/>
    <property type="evidence" value="ECO:0007669"/>
    <property type="project" value="UniProtKB-UniRule"/>
</dbReference>
<dbReference type="GO" id="GO:0051287">
    <property type="term" value="F:NAD binding"/>
    <property type="evidence" value="ECO:0007669"/>
    <property type="project" value="InterPro"/>
</dbReference>
<dbReference type="GO" id="GO:0070401">
    <property type="term" value="F:NADP+ binding"/>
    <property type="evidence" value="ECO:0007669"/>
    <property type="project" value="InterPro"/>
</dbReference>
<dbReference type="GO" id="GO:0006526">
    <property type="term" value="P:L-arginine biosynthetic process"/>
    <property type="evidence" value="ECO:0007669"/>
    <property type="project" value="UniProtKB-UniRule"/>
</dbReference>
<dbReference type="CDD" id="cd24148">
    <property type="entry name" value="AGPR_1_actinobacAGPR_like"/>
    <property type="match status" value="1"/>
</dbReference>
<dbReference type="CDD" id="cd23934">
    <property type="entry name" value="AGPR_1_C"/>
    <property type="match status" value="1"/>
</dbReference>
<dbReference type="Gene3D" id="3.30.360.10">
    <property type="entry name" value="Dihydrodipicolinate Reductase, domain 2"/>
    <property type="match status" value="1"/>
</dbReference>
<dbReference type="Gene3D" id="3.40.50.720">
    <property type="entry name" value="NAD(P)-binding Rossmann-like Domain"/>
    <property type="match status" value="1"/>
</dbReference>
<dbReference type="HAMAP" id="MF_00150">
    <property type="entry name" value="ArgC_type1"/>
    <property type="match status" value="1"/>
</dbReference>
<dbReference type="InterPro" id="IPR000706">
    <property type="entry name" value="AGPR_type-1"/>
</dbReference>
<dbReference type="InterPro" id="IPR036291">
    <property type="entry name" value="NAD(P)-bd_dom_sf"/>
</dbReference>
<dbReference type="InterPro" id="IPR050085">
    <property type="entry name" value="NAGSA_dehydrogenase"/>
</dbReference>
<dbReference type="InterPro" id="IPR000534">
    <property type="entry name" value="Semialdehyde_DH_NAD-bd"/>
</dbReference>
<dbReference type="NCBIfam" id="TIGR01850">
    <property type="entry name" value="argC"/>
    <property type="match status" value="1"/>
</dbReference>
<dbReference type="PANTHER" id="PTHR32338:SF10">
    <property type="entry name" value="N-ACETYL-GAMMA-GLUTAMYL-PHOSPHATE REDUCTASE, CHLOROPLASTIC-RELATED"/>
    <property type="match status" value="1"/>
</dbReference>
<dbReference type="PANTHER" id="PTHR32338">
    <property type="entry name" value="N-ACETYL-GAMMA-GLUTAMYL-PHOSPHATE REDUCTASE, CHLOROPLASTIC-RELATED-RELATED"/>
    <property type="match status" value="1"/>
</dbReference>
<dbReference type="Pfam" id="PF01118">
    <property type="entry name" value="Semialdhyde_dh"/>
    <property type="match status" value="1"/>
</dbReference>
<dbReference type="Pfam" id="PF22698">
    <property type="entry name" value="Semialdhyde_dhC_1"/>
    <property type="match status" value="1"/>
</dbReference>
<dbReference type="SMART" id="SM00859">
    <property type="entry name" value="Semialdhyde_dh"/>
    <property type="match status" value="1"/>
</dbReference>
<dbReference type="SUPFAM" id="SSF55347">
    <property type="entry name" value="Glyceraldehyde-3-phosphate dehydrogenase-like, C-terminal domain"/>
    <property type="match status" value="1"/>
</dbReference>
<dbReference type="SUPFAM" id="SSF51735">
    <property type="entry name" value="NAD(P)-binding Rossmann-fold domains"/>
    <property type="match status" value="1"/>
</dbReference>
<keyword id="KW-0028">Amino-acid biosynthesis</keyword>
<keyword id="KW-0055">Arginine biosynthesis</keyword>
<keyword id="KW-0963">Cytoplasm</keyword>
<keyword id="KW-0521">NADP</keyword>
<keyword id="KW-0560">Oxidoreductase</keyword>
<keyword id="KW-1185">Reference proteome</keyword>
<name>ARGC_BRASB</name>
<comment type="function">
    <text evidence="1">Catalyzes the NADPH-dependent reduction of N-acetyl-5-glutamyl phosphate to yield N-acetyl-L-glutamate 5-semialdehyde.</text>
</comment>
<comment type="catalytic activity">
    <reaction evidence="1">
        <text>N-acetyl-L-glutamate 5-semialdehyde + phosphate + NADP(+) = N-acetyl-L-glutamyl 5-phosphate + NADPH + H(+)</text>
        <dbReference type="Rhea" id="RHEA:21588"/>
        <dbReference type="ChEBI" id="CHEBI:15378"/>
        <dbReference type="ChEBI" id="CHEBI:29123"/>
        <dbReference type="ChEBI" id="CHEBI:43474"/>
        <dbReference type="ChEBI" id="CHEBI:57783"/>
        <dbReference type="ChEBI" id="CHEBI:57936"/>
        <dbReference type="ChEBI" id="CHEBI:58349"/>
        <dbReference type="EC" id="1.2.1.38"/>
    </reaction>
</comment>
<comment type="pathway">
    <text evidence="1">Amino-acid biosynthesis; L-arginine biosynthesis; N(2)-acetyl-L-ornithine from L-glutamate: step 3/4.</text>
</comment>
<comment type="subcellular location">
    <subcellularLocation>
        <location evidence="1">Cytoplasm</location>
    </subcellularLocation>
</comment>
<comment type="similarity">
    <text evidence="1">Belongs to the NAGSA dehydrogenase family. Type 1 subfamily.</text>
</comment>
<accession>A5EB56</accession>
<gene>
    <name evidence="1" type="primary">argC</name>
    <name type="ordered locus">BBta_1151</name>
</gene>
<evidence type="ECO:0000255" key="1">
    <source>
        <dbReference type="HAMAP-Rule" id="MF_00150"/>
    </source>
</evidence>
<proteinExistence type="inferred from homology"/>
<sequence length="324" mass="33809">MSIRVGIVGISGFGGGEAMRLVAGHPSFELVYAAGEGSAGQRLAERFPGVPAKLADLVIEKWDPARLPSLDVLFASLPTGASRDALARVPDDVKIVDIGGDHRYADGWTYGLADVWPQEIASKTRIANPGCFPAAALTPLAPLLADKLISPDTIVIDAKTGISGAGRGGGTGFGYAESNENLIPYGLLRHVHMPEIERSIARISGGSATGLVFTPHLVPMTRGILATIYARGRATTAQCLDAARRFYEGSAFVRVTDKPPQTKWAAGSNLAFVSYAADPERNLVIALGVVDNLGKGAAGQAVQNANLMCGLPETAGLEGAPVWP</sequence>
<organism>
    <name type="scientific">Bradyrhizobium sp. (strain BTAi1 / ATCC BAA-1182)</name>
    <dbReference type="NCBI Taxonomy" id="288000"/>
    <lineage>
        <taxon>Bacteria</taxon>
        <taxon>Pseudomonadati</taxon>
        <taxon>Pseudomonadota</taxon>
        <taxon>Alphaproteobacteria</taxon>
        <taxon>Hyphomicrobiales</taxon>
        <taxon>Nitrobacteraceae</taxon>
        <taxon>Bradyrhizobium</taxon>
    </lineage>
</organism>
<reference key="1">
    <citation type="journal article" date="2007" name="Science">
        <title>Legumes symbioses: absence of nod genes in photosynthetic bradyrhizobia.</title>
        <authorList>
            <person name="Giraud E."/>
            <person name="Moulin L."/>
            <person name="Vallenet D."/>
            <person name="Barbe V."/>
            <person name="Cytryn E."/>
            <person name="Avarre J.-C."/>
            <person name="Jaubert M."/>
            <person name="Simon D."/>
            <person name="Cartieaux F."/>
            <person name="Prin Y."/>
            <person name="Bena G."/>
            <person name="Hannibal L."/>
            <person name="Fardoux J."/>
            <person name="Kojadinovic M."/>
            <person name="Vuillet L."/>
            <person name="Lajus A."/>
            <person name="Cruveiller S."/>
            <person name="Rouy Z."/>
            <person name="Mangenot S."/>
            <person name="Segurens B."/>
            <person name="Dossat C."/>
            <person name="Franck W.L."/>
            <person name="Chang W.-S."/>
            <person name="Saunders E."/>
            <person name="Bruce D."/>
            <person name="Richardson P."/>
            <person name="Normand P."/>
            <person name="Dreyfus B."/>
            <person name="Pignol D."/>
            <person name="Stacey G."/>
            <person name="Emerich D."/>
            <person name="Vermeglio A."/>
            <person name="Medigue C."/>
            <person name="Sadowsky M."/>
        </authorList>
    </citation>
    <scope>NUCLEOTIDE SEQUENCE [LARGE SCALE GENOMIC DNA]</scope>
    <source>
        <strain>BTAi1 / ATCC BAA-1182</strain>
    </source>
</reference>